<protein>
    <recommendedName>
        <fullName evidence="1">Galactose/methyl galactoside import ATP-binding protein MglA</fullName>
        <ecNumber evidence="1">7.5.2.11</ecNumber>
    </recommendedName>
</protein>
<feature type="chain" id="PRO_0000261366" description="Galactose/methyl galactoside import ATP-binding protein MglA">
    <location>
        <begin position="1"/>
        <end position="506"/>
    </location>
</feature>
<feature type="domain" description="ABC transporter 1" evidence="1">
    <location>
        <begin position="14"/>
        <end position="249"/>
    </location>
</feature>
<feature type="domain" description="ABC transporter 2" evidence="1">
    <location>
        <begin position="264"/>
        <end position="506"/>
    </location>
</feature>
<feature type="binding site" evidence="1">
    <location>
        <begin position="46"/>
        <end position="53"/>
    </location>
    <ligand>
        <name>ATP</name>
        <dbReference type="ChEBI" id="CHEBI:30616"/>
    </ligand>
</feature>
<name>MGLA_ECOL5</name>
<gene>
    <name evidence="1" type="primary">mglA</name>
    <name type="ordered locus">ECP_2188</name>
</gene>
<keyword id="KW-0067">ATP-binding</keyword>
<keyword id="KW-0997">Cell inner membrane</keyword>
<keyword id="KW-1003">Cell membrane</keyword>
<keyword id="KW-0472">Membrane</keyword>
<keyword id="KW-0547">Nucleotide-binding</keyword>
<keyword id="KW-0677">Repeat</keyword>
<keyword id="KW-0762">Sugar transport</keyword>
<keyword id="KW-1278">Translocase</keyword>
<keyword id="KW-0813">Transport</keyword>
<evidence type="ECO:0000255" key="1">
    <source>
        <dbReference type="HAMAP-Rule" id="MF_01717"/>
    </source>
</evidence>
<reference key="1">
    <citation type="journal article" date="2006" name="Mol. Microbiol.">
        <title>Role of pathogenicity island-associated integrases in the genome plasticity of uropathogenic Escherichia coli strain 536.</title>
        <authorList>
            <person name="Hochhut B."/>
            <person name="Wilde C."/>
            <person name="Balling G."/>
            <person name="Middendorf B."/>
            <person name="Dobrindt U."/>
            <person name="Brzuszkiewicz E."/>
            <person name="Gottschalk G."/>
            <person name="Carniel E."/>
            <person name="Hacker J."/>
        </authorList>
    </citation>
    <scope>NUCLEOTIDE SEQUENCE [LARGE SCALE GENOMIC DNA]</scope>
    <source>
        <strain>536 / UPEC</strain>
    </source>
</reference>
<sequence length="506" mass="56388">MVSSTTPSSGEYLLEMSGINKSFPGVKALDNVNLKVRPHSIHALMGENGAGKSTLLKCLFGIYQKDSGTILFQGKEIDFHSAKEALENGISMVHQELNLVLQRSVMDNMWLGRYPTKGMFVDQDKMYRETKAIFDELDIDIDPRARVGTLSVSQMQMIEIAKAFSYNAKIVIMDEPTSSLTEKEVNHLFTIIRKLKERGCGIVYISHKMEEIFQLCDEVTVLRDGQWIATEPLAGLTMDKIIAMMVGRSLNQRFPDKENKPGEVILEVRNLTSLRQPSIRDVSFDLHKGEILGIAGLVGAKRTDIVETLFGIREKSAGTITLHGKKINNHNANEAINHGFALVTEERRSTGIYAYLDIGFNSLISNIRNYKNKVGLLDNSRMKSDTQWVIDSMRVKTPGHRTQIGSLSGGNQQKVIIGRWLLTQPEILMLDEPTRGIDVGAKFEIYQLIAELAKKGKGIIIISSEMPELLGITDRILVMSNGLVSGIVDTKTTTQSEILRLASLHL</sequence>
<accession>Q0TFU2</accession>
<organism>
    <name type="scientific">Escherichia coli O6:K15:H31 (strain 536 / UPEC)</name>
    <dbReference type="NCBI Taxonomy" id="362663"/>
    <lineage>
        <taxon>Bacteria</taxon>
        <taxon>Pseudomonadati</taxon>
        <taxon>Pseudomonadota</taxon>
        <taxon>Gammaproteobacteria</taxon>
        <taxon>Enterobacterales</taxon>
        <taxon>Enterobacteriaceae</taxon>
        <taxon>Escherichia</taxon>
    </lineage>
</organism>
<dbReference type="EC" id="7.5.2.11" evidence="1"/>
<dbReference type="EMBL" id="CP000247">
    <property type="protein sequence ID" value="ABG70187.1"/>
    <property type="molecule type" value="Genomic_DNA"/>
</dbReference>
<dbReference type="RefSeq" id="WP_000255034.1">
    <property type="nucleotide sequence ID" value="NC_008253.1"/>
</dbReference>
<dbReference type="SMR" id="Q0TFU2"/>
<dbReference type="KEGG" id="ecp:ECP_2188"/>
<dbReference type="HOGENOM" id="CLU_000604_92_3_6"/>
<dbReference type="Proteomes" id="UP000009182">
    <property type="component" value="Chromosome"/>
</dbReference>
<dbReference type="GO" id="GO:0005886">
    <property type="term" value="C:plasma membrane"/>
    <property type="evidence" value="ECO:0007669"/>
    <property type="project" value="UniProtKB-SubCell"/>
</dbReference>
<dbReference type="GO" id="GO:0005524">
    <property type="term" value="F:ATP binding"/>
    <property type="evidence" value="ECO:0007669"/>
    <property type="project" value="UniProtKB-KW"/>
</dbReference>
<dbReference type="GO" id="GO:0016887">
    <property type="term" value="F:ATP hydrolysis activity"/>
    <property type="evidence" value="ECO:0007669"/>
    <property type="project" value="InterPro"/>
</dbReference>
<dbReference type="CDD" id="cd03216">
    <property type="entry name" value="ABC_Carb_Monos_I"/>
    <property type="match status" value="1"/>
</dbReference>
<dbReference type="CDD" id="cd03215">
    <property type="entry name" value="ABC_Carb_Monos_II"/>
    <property type="match status" value="1"/>
</dbReference>
<dbReference type="FunFam" id="3.40.50.300:FF:000126">
    <property type="entry name" value="Galactose/methyl galactoside import ATP-binding protein MglA"/>
    <property type="match status" value="1"/>
</dbReference>
<dbReference type="FunFam" id="3.40.50.300:FF:000127">
    <property type="entry name" value="Ribose import ATP-binding protein RbsA"/>
    <property type="match status" value="1"/>
</dbReference>
<dbReference type="Gene3D" id="3.40.50.300">
    <property type="entry name" value="P-loop containing nucleotide triphosphate hydrolases"/>
    <property type="match status" value="2"/>
</dbReference>
<dbReference type="InterPro" id="IPR003593">
    <property type="entry name" value="AAA+_ATPase"/>
</dbReference>
<dbReference type="InterPro" id="IPR050107">
    <property type="entry name" value="ABC_carbohydrate_import_ATPase"/>
</dbReference>
<dbReference type="InterPro" id="IPR003439">
    <property type="entry name" value="ABC_transporter-like_ATP-bd"/>
</dbReference>
<dbReference type="InterPro" id="IPR017871">
    <property type="entry name" value="ABC_transporter-like_CS"/>
</dbReference>
<dbReference type="InterPro" id="IPR027417">
    <property type="entry name" value="P-loop_NTPase"/>
</dbReference>
<dbReference type="NCBIfam" id="NF008215">
    <property type="entry name" value="PRK10982.1"/>
    <property type="match status" value="1"/>
</dbReference>
<dbReference type="PANTHER" id="PTHR43790">
    <property type="entry name" value="CARBOHYDRATE TRANSPORT ATP-BINDING PROTEIN MG119-RELATED"/>
    <property type="match status" value="1"/>
</dbReference>
<dbReference type="PANTHER" id="PTHR43790:SF7">
    <property type="entry name" value="GALACTOSE_METHYL GALACTOSIDE IMPORT ATP-BINDING PROTEIN MGLA"/>
    <property type="match status" value="1"/>
</dbReference>
<dbReference type="Pfam" id="PF00005">
    <property type="entry name" value="ABC_tran"/>
    <property type="match status" value="2"/>
</dbReference>
<dbReference type="SMART" id="SM00382">
    <property type="entry name" value="AAA"/>
    <property type="match status" value="2"/>
</dbReference>
<dbReference type="SUPFAM" id="SSF52540">
    <property type="entry name" value="P-loop containing nucleoside triphosphate hydrolases"/>
    <property type="match status" value="2"/>
</dbReference>
<dbReference type="PROSITE" id="PS00211">
    <property type="entry name" value="ABC_TRANSPORTER_1"/>
    <property type="match status" value="1"/>
</dbReference>
<dbReference type="PROSITE" id="PS50893">
    <property type="entry name" value="ABC_TRANSPORTER_2"/>
    <property type="match status" value="2"/>
</dbReference>
<dbReference type="PROSITE" id="PS51260">
    <property type="entry name" value="MGLA"/>
    <property type="match status" value="1"/>
</dbReference>
<proteinExistence type="inferred from homology"/>
<comment type="function">
    <text evidence="1">Part of the ABC transporter complex MglABC involved in galactose/methyl galactoside import. Responsible for energy coupling to the transport system.</text>
</comment>
<comment type="catalytic activity">
    <reaction evidence="1">
        <text>D-galactose(out) + ATP + H2O = D-galactose(in) + ADP + phosphate + H(+)</text>
        <dbReference type="Rhea" id="RHEA:60156"/>
        <dbReference type="ChEBI" id="CHEBI:4139"/>
        <dbReference type="ChEBI" id="CHEBI:15377"/>
        <dbReference type="ChEBI" id="CHEBI:15378"/>
        <dbReference type="ChEBI" id="CHEBI:30616"/>
        <dbReference type="ChEBI" id="CHEBI:43474"/>
        <dbReference type="ChEBI" id="CHEBI:456216"/>
        <dbReference type="EC" id="7.5.2.11"/>
    </reaction>
    <physiologicalReaction direction="left-to-right" evidence="1">
        <dbReference type="Rhea" id="RHEA:60157"/>
    </physiologicalReaction>
</comment>
<comment type="catalytic activity">
    <reaction evidence="1">
        <text>methyl beta-D-galactoside(out) + ATP + H2O = methyl beta-D-galactoside(in) + ADP + phosphate + H(+)</text>
        <dbReference type="Rhea" id="RHEA:72531"/>
        <dbReference type="ChEBI" id="CHEBI:15377"/>
        <dbReference type="ChEBI" id="CHEBI:15378"/>
        <dbReference type="ChEBI" id="CHEBI:17540"/>
        <dbReference type="ChEBI" id="CHEBI:30616"/>
        <dbReference type="ChEBI" id="CHEBI:43474"/>
        <dbReference type="ChEBI" id="CHEBI:456216"/>
    </reaction>
    <physiologicalReaction direction="left-to-right" evidence="1">
        <dbReference type="Rhea" id="RHEA:72532"/>
    </physiologicalReaction>
</comment>
<comment type="subunit">
    <text evidence="1">The complex is composed of one ATP-binding protein (MglA), two transmembrane proteins (MglC) and a solute-binding protein (MglB).</text>
</comment>
<comment type="subcellular location">
    <subcellularLocation>
        <location evidence="1">Cell inner membrane</location>
        <topology evidence="1">Peripheral membrane protein</topology>
    </subcellularLocation>
</comment>
<comment type="similarity">
    <text evidence="1">Belongs to the ABC transporter superfamily. Galactose/methyl galactoside importer (TC 3.A.1.2.3) family.</text>
</comment>